<comment type="function">
    <text evidence="1">Involved in the biosynthesis of ADP-glucose, a building block required for the elongation reactions to produce glycogen. Catalyzes the reaction between ATP and alpha-D-glucose 1-phosphate (G1P) to produce pyrophosphate and ADP-Glc.</text>
</comment>
<comment type="catalytic activity">
    <reaction evidence="1">
        <text>alpha-D-glucose 1-phosphate + ATP + H(+) = ADP-alpha-D-glucose + diphosphate</text>
        <dbReference type="Rhea" id="RHEA:12120"/>
        <dbReference type="ChEBI" id="CHEBI:15378"/>
        <dbReference type="ChEBI" id="CHEBI:30616"/>
        <dbReference type="ChEBI" id="CHEBI:33019"/>
        <dbReference type="ChEBI" id="CHEBI:57498"/>
        <dbReference type="ChEBI" id="CHEBI:58601"/>
        <dbReference type="EC" id="2.7.7.27"/>
    </reaction>
</comment>
<comment type="pathway">
    <text evidence="1">Glycan biosynthesis; glycogen biosynthesis.</text>
</comment>
<comment type="subunit">
    <text evidence="1">Homotetramer.</text>
</comment>
<comment type="similarity">
    <text evidence="1">Belongs to the bacterial/plant glucose-1-phosphate adenylyltransferase family.</text>
</comment>
<gene>
    <name evidence="1" type="primary">glgC</name>
</gene>
<dbReference type="EC" id="2.7.7.27" evidence="1"/>
<dbReference type="EMBL" id="D87026">
    <property type="protein sequence ID" value="BAA19589.1"/>
    <property type="molecule type" value="Genomic_DNA"/>
</dbReference>
<dbReference type="SMR" id="O08326"/>
<dbReference type="UniPathway" id="UPA00164"/>
<dbReference type="GO" id="GO:0005524">
    <property type="term" value="F:ATP binding"/>
    <property type="evidence" value="ECO:0007669"/>
    <property type="project" value="UniProtKB-KW"/>
</dbReference>
<dbReference type="GO" id="GO:0008878">
    <property type="term" value="F:glucose-1-phosphate adenylyltransferase activity"/>
    <property type="evidence" value="ECO:0007669"/>
    <property type="project" value="UniProtKB-UniRule"/>
</dbReference>
<dbReference type="GO" id="GO:0005978">
    <property type="term" value="P:glycogen biosynthetic process"/>
    <property type="evidence" value="ECO:0007669"/>
    <property type="project" value="UniProtKB-UniRule"/>
</dbReference>
<dbReference type="CDD" id="cd02508">
    <property type="entry name" value="ADP_Glucose_PP"/>
    <property type="match status" value="1"/>
</dbReference>
<dbReference type="CDD" id="cd04651">
    <property type="entry name" value="LbH_G1P_AT_C"/>
    <property type="match status" value="1"/>
</dbReference>
<dbReference type="Gene3D" id="2.160.10.10">
    <property type="entry name" value="Hexapeptide repeat proteins"/>
    <property type="match status" value="1"/>
</dbReference>
<dbReference type="Gene3D" id="3.90.550.10">
    <property type="entry name" value="Spore Coat Polysaccharide Biosynthesis Protein SpsA, Chain A"/>
    <property type="match status" value="1"/>
</dbReference>
<dbReference type="HAMAP" id="MF_00624">
    <property type="entry name" value="GlgC"/>
    <property type="match status" value="1"/>
</dbReference>
<dbReference type="InterPro" id="IPR011831">
    <property type="entry name" value="ADP-Glc_PPase"/>
</dbReference>
<dbReference type="InterPro" id="IPR005836">
    <property type="entry name" value="ADP_Glu_pyroP_CS"/>
</dbReference>
<dbReference type="InterPro" id="IPR023049">
    <property type="entry name" value="GlgC_bac"/>
</dbReference>
<dbReference type="InterPro" id="IPR056818">
    <property type="entry name" value="GlmU/GlgC-like_hexapep"/>
</dbReference>
<dbReference type="InterPro" id="IPR005835">
    <property type="entry name" value="NTP_transferase_dom"/>
</dbReference>
<dbReference type="InterPro" id="IPR029044">
    <property type="entry name" value="Nucleotide-diphossugar_trans"/>
</dbReference>
<dbReference type="InterPro" id="IPR011004">
    <property type="entry name" value="Trimer_LpxA-like_sf"/>
</dbReference>
<dbReference type="NCBIfam" id="TIGR02091">
    <property type="entry name" value="glgC"/>
    <property type="match status" value="1"/>
</dbReference>
<dbReference type="NCBIfam" id="NF003670">
    <property type="entry name" value="PRK05293.1"/>
    <property type="match status" value="1"/>
</dbReference>
<dbReference type="PANTHER" id="PTHR43523:SF2">
    <property type="entry name" value="GLUCOSE-1-PHOSPHATE ADENYLYLTRANSFERASE"/>
    <property type="match status" value="1"/>
</dbReference>
<dbReference type="PANTHER" id="PTHR43523">
    <property type="entry name" value="GLUCOSE-1-PHOSPHATE ADENYLYLTRANSFERASE-RELATED"/>
    <property type="match status" value="1"/>
</dbReference>
<dbReference type="Pfam" id="PF24894">
    <property type="entry name" value="Hexapep_GlmU"/>
    <property type="match status" value="1"/>
</dbReference>
<dbReference type="Pfam" id="PF00483">
    <property type="entry name" value="NTP_transferase"/>
    <property type="match status" value="1"/>
</dbReference>
<dbReference type="SUPFAM" id="SSF53448">
    <property type="entry name" value="Nucleotide-diphospho-sugar transferases"/>
    <property type="match status" value="1"/>
</dbReference>
<dbReference type="SUPFAM" id="SSF51161">
    <property type="entry name" value="Trimeric LpxA-like enzymes"/>
    <property type="match status" value="1"/>
</dbReference>
<dbReference type="PROSITE" id="PS00808">
    <property type="entry name" value="ADP_GLC_PYROPHOSPH_1"/>
    <property type="match status" value="1"/>
</dbReference>
<dbReference type="PROSITE" id="PS00809">
    <property type="entry name" value="ADP_GLC_PYROPHOSPH_2"/>
    <property type="match status" value="1"/>
</dbReference>
<dbReference type="PROSITE" id="PS00810">
    <property type="entry name" value="ADP_GLC_PYROPHOSPH_3"/>
    <property type="match status" value="1"/>
</dbReference>
<accession>O08326</accession>
<sequence length="387" mass="43268">MKKKCIAMLLAGGQGSRLRSLTTNIAKPAVPFGGKYRIIDFTLSNCTNSGIDTVGVLTQYQPLLLHSYIGIGSAWDLDRRNGGVTVLPPYSVSSGVKWYEGTANAVYQNINYIEQYNPDYVLVLSGDHIYKMDYQHMLDYHIAKQADVTISVIEVPWEEASRFGIMNTNEEMEIVEFAEKPAEPKSNLASMGIYIFNWPLLKQYLQIDNANPHSSHDFGKDVIPMLLREKKRPFAYPFEGYWKDVGTVKSLWEANMDLLDENNELDLFDRSWRIYSVNPNQPPQYISPEAEVSDSLVNEGCVVEGTVERSVLFQGVRIGKGAVVKESVIMPGAAVSEGAYVERAIVTPDSIIPPHSSVCPEDADDVVLVTAEWLKQSNEETARKDEA</sequence>
<keyword id="KW-0067">ATP-binding</keyword>
<keyword id="KW-0119">Carbohydrate metabolism</keyword>
<keyword id="KW-0320">Glycogen biosynthesis</keyword>
<keyword id="KW-0321">Glycogen metabolism</keyword>
<keyword id="KW-0547">Nucleotide-binding</keyword>
<keyword id="KW-0548">Nucleotidyltransferase</keyword>
<keyword id="KW-0808">Transferase</keyword>
<feature type="chain" id="PRO_0000195283" description="Glucose-1-phosphate adenylyltransferase">
    <location>
        <begin position="1"/>
        <end position="387"/>
    </location>
</feature>
<feature type="binding site" evidence="1">
    <location>
        <position position="99"/>
    </location>
    <ligand>
        <name>alpha-D-glucose 1-phosphate</name>
        <dbReference type="ChEBI" id="CHEBI:58601"/>
    </ligand>
</feature>
<feature type="binding site" evidence="1">
    <location>
        <position position="164"/>
    </location>
    <ligand>
        <name>alpha-D-glucose 1-phosphate</name>
        <dbReference type="ChEBI" id="CHEBI:58601"/>
    </ligand>
</feature>
<feature type="binding site" evidence="1">
    <location>
        <begin position="179"/>
        <end position="180"/>
    </location>
    <ligand>
        <name>alpha-D-glucose 1-phosphate</name>
        <dbReference type="ChEBI" id="CHEBI:58601"/>
    </ligand>
</feature>
<feature type="binding site" evidence="1">
    <location>
        <position position="190"/>
    </location>
    <ligand>
        <name>alpha-D-glucose 1-phosphate</name>
        <dbReference type="ChEBI" id="CHEBI:58601"/>
    </ligand>
</feature>
<organism>
    <name type="scientific">Geobacillus stearothermophilus</name>
    <name type="common">Bacillus stearothermophilus</name>
    <dbReference type="NCBI Taxonomy" id="1422"/>
    <lineage>
        <taxon>Bacteria</taxon>
        <taxon>Bacillati</taxon>
        <taxon>Bacillota</taxon>
        <taxon>Bacilli</taxon>
        <taxon>Bacillales</taxon>
        <taxon>Anoxybacillaceae</taxon>
        <taxon>Geobacillus</taxon>
    </lineage>
</organism>
<name>GLGC_GEOSE</name>
<reference key="1">
    <citation type="journal article" date="1997" name="J. Bacteriol.">
        <title>Characterization of a gene cluster for glycogen biosynthesis and a heterotetrameric ADP-glucose pyrophosphorylase from Bacillus stearothermophilus.</title>
        <authorList>
            <person name="Takata H."/>
            <person name="Takaha T."/>
            <person name="Okada S."/>
            <person name="Takagi M."/>
            <person name="Imanaka T."/>
        </authorList>
    </citation>
    <scope>NUCLEOTIDE SEQUENCE [GENOMIC DNA]</scope>
    <source>
        <strain>TRBE14</strain>
    </source>
</reference>
<evidence type="ECO:0000255" key="1">
    <source>
        <dbReference type="HAMAP-Rule" id="MF_00624"/>
    </source>
</evidence>
<proteinExistence type="inferred from homology"/>
<protein>
    <recommendedName>
        <fullName evidence="1">Glucose-1-phosphate adenylyltransferase</fullName>
        <ecNumber evidence="1">2.7.7.27</ecNumber>
    </recommendedName>
    <alternativeName>
        <fullName evidence="1">ADP-glucose pyrophosphorylase</fullName>
        <shortName evidence="1">ADPGlc PPase</shortName>
    </alternativeName>
    <alternativeName>
        <fullName evidence="1">ADP-glucose synthase</fullName>
    </alternativeName>
</protein>